<comment type="function">
    <text evidence="1">Allows the formation of correctly charged Gln-tRNA(Gln) through the transamidation of misacylated Glu-tRNA(Gln) in organisms which lack glutaminyl-tRNA synthetase. The reaction takes place in the presence of glutamine and ATP through an activated gamma-phospho-Glu-tRNA(Gln).</text>
</comment>
<comment type="catalytic activity">
    <reaction evidence="1">
        <text>L-glutamyl-tRNA(Gln) + L-glutamine + ATP + H2O = L-glutaminyl-tRNA(Gln) + L-glutamate + ADP + phosphate + H(+)</text>
        <dbReference type="Rhea" id="RHEA:17521"/>
        <dbReference type="Rhea" id="RHEA-COMP:9681"/>
        <dbReference type="Rhea" id="RHEA-COMP:9684"/>
        <dbReference type="ChEBI" id="CHEBI:15377"/>
        <dbReference type="ChEBI" id="CHEBI:15378"/>
        <dbReference type="ChEBI" id="CHEBI:29985"/>
        <dbReference type="ChEBI" id="CHEBI:30616"/>
        <dbReference type="ChEBI" id="CHEBI:43474"/>
        <dbReference type="ChEBI" id="CHEBI:58359"/>
        <dbReference type="ChEBI" id="CHEBI:78520"/>
        <dbReference type="ChEBI" id="CHEBI:78521"/>
        <dbReference type="ChEBI" id="CHEBI:456216"/>
        <dbReference type="EC" id="6.3.5.7"/>
    </reaction>
</comment>
<comment type="subunit">
    <text evidence="1">Heterotrimer of A, B and C subunits.</text>
</comment>
<comment type="similarity">
    <text evidence="1">Belongs to the amidase family. GatA subfamily.</text>
</comment>
<comment type="sequence caution" evidence="2">
    <conflict type="erroneous initiation">
        <sequence resource="EMBL-CDS" id="ABB73630"/>
    </conflict>
</comment>
<evidence type="ECO:0000255" key="1">
    <source>
        <dbReference type="HAMAP-Rule" id="MF_00120"/>
    </source>
</evidence>
<evidence type="ECO:0000305" key="2"/>
<name>GATA_NITMU</name>
<gene>
    <name evidence="1" type="primary">gatA</name>
    <name type="ordered locus">Nmul_A0322</name>
</gene>
<dbReference type="EC" id="6.3.5.7" evidence="1"/>
<dbReference type="EMBL" id="CP000103">
    <property type="protein sequence ID" value="ABB73630.1"/>
    <property type="status" value="ALT_INIT"/>
    <property type="molecule type" value="Genomic_DNA"/>
</dbReference>
<dbReference type="RefSeq" id="WP_041352745.1">
    <property type="nucleotide sequence ID" value="NC_007614.1"/>
</dbReference>
<dbReference type="SMR" id="Q2YC91"/>
<dbReference type="STRING" id="323848.Nmul_A0322"/>
<dbReference type="KEGG" id="nmu:Nmul_A0322"/>
<dbReference type="eggNOG" id="COG0154">
    <property type="taxonomic scope" value="Bacteria"/>
</dbReference>
<dbReference type="HOGENOM" id="CLU_009600_0_3_4"/>
<dbReference type="OrthoDB" id="9811471at2"/>
<dbReference type="Proteomes" id="UP000002718">
    <property type="component" value="Chromosome"/>
</dbReference>
<dbReference type="GO" id="GO:0030956">
    <property type="term" value="C:glutamyl-tRNA(Gln) amidotransferase complex"/>
    <property type="evidence" value="ECO:0007669"/>
    <property type="project" value="InterPro"/>
</dbReference>
<dbReference type="GO" id="GO:0005524">
    <property type="term" value="F:ATP binding"/>
    <property type="evidence" value="ECO:0007669"/>
    <property type="project" value="UniProtKB-KW"/>
</dbReference>
<dbReference type="GO" id="GO:0050567">
    <property type="term" value="F:glutaminyl-tRNA synthase (glutamine-hydrolyzing) activity"/>
    <property type="evidence" value="ECO:0007669"/>
    <property type="project" value="UniProtKB-UniRule"/>
</dbReference>
<dbReference type="GO" id="GO:0006412">
    <property type="term" value="P:translation"/>
    <property type="evidence" value="ECO:0007669"/>
    <property type="project" value="UniProtKB-UniRule"/>
</dbReference>
<dbReference type="Gene3D" id="3.90.1300.10">
    <property type="entry name" value="Amidase signature (AS) domain"/>
    <property type="match status" value="1"/>
</dbReference>
<dbReference type="HAMAP" id="MF_00120">
    <property type="entry name" value="GatA"/>
    <property type="match status" value="1"/>
</dbReference>
<dbReference type="InterPro" id="IPR000120">
    <property type="entry name" value="Amidase"/>
</dbReference>
<dbReference type="InterPro" id="IPR020556">
    <property type="entry name" value="Amidase_CS"/>
</dbReference>
<dbReference type="InterPro" id="IPR023631">
    <property type="entry name" value="Amidase_dom"/>
</dbReference>
<dbReference type="InterPro" id="IPR036928">
    <property type="entry name" value="AS_sf"/>
</dbReference>
<dbReference type="InterPro" id="IPR004412">
    <property type="entry name" value="GatA"/>
</dbReference>
<dbReference type="NCBIfam" id="TIGR00132">
    <property type="entry name" value="gatA"/>
    <property type="match status" value="1"/>
</dbReference>
<dbReference type="PANTHER" id="PTHR11895:SF151">
    <property type="entry name" value="GLUTAMYL-TRNA(GLN) AMIDOTRANSFERASE SUBUNIT A"/>
    <property type="match status" value="1"/>
</dbReference>
<dbReference type="PANTHER" id="PTHR11895">
    <property type="entry name" value="TRANSAMIDASE"/>
    <property type="match status" value="1"/>
</dbReference>
<dbReference type="Pfam" id="PF01425">
    <property type="entry name" value="Amidase"/>
    <property type="match status" value="1"/>
</dbReference>
<dbReference type="SUPFAM" id="SSF75304">
    <property type="entry name" value="Amidase signature (AS) enzymes"/>
    <property type="match status" value="1"/>
</dbReference>
<dbReference type="PROSITE" id="PS00571">
    <property type="entry name" value="AMIDASES"/>
    <property type="match status" value="1"/>
</dbReference>
<reference key="1">
    <citation type="submission" date="2005-08" db="EMBL/GenBank/DDBJ databases">
        <title>Complete sequence of chromosome 1 of Nitrosospira multiformis ATCC 25196.</title>
        <authorList>
            <person name="Copeland A."/>
            <person name="Lucas S."/>
            <person name="Lapidus A."/>
            <person name="Barry K."/>
            <person name="Detter J.C."/>
            <person name="Glavina T."/>
            <person name="Hammon N."/>
            <person name="Israni S."/>
            <person name="Pitluck S."/>
            <person name="Chain P."/>
            <person name="Malfatti S."/>
            <person name="Shin M."/>
            <person name="Vergez L."/>
            <person name="Schmutz J."/>
            <person name="Larimer F."/>
            <person name="Land M."/>
            <person name="Hauser L."/>
            <person name="Kyrpides N."/>
            <person name="Lykidis A."/>
            <person name="Richardson P."/>
        </authorList>
    </citation>
    <scope>NUCLEOTIDE SEQUENCE [LARGE SCALE GENOMIC DNA]</scope>
    <source>
        <strain>ATCC 25196 / NCIMB 11849 / C 71</strain>
    </source>
</reference>
<protein>
    <recommendedName>
        <fullName evidence="1">Glutamyl-tRNA(Gln) amidotransferase subunit A</fullName>
        <shortName evidence="1">Glu-ADT subunit A</shortName>
        <ecNumber evidence="1">6.3.5.7</ecNumber>
    </recommendedName>
</protein>
<accession>Q2YC91</accession>
<organism>
    <name type="scientific">Nitrosospira multiformis (strain ATCC 25196 / NCIMB 11849 / C 71)</name>
    <dbReference type="NCBI Taxonomy" id="323848"/>
    <lineage>
        <taxon>Bacteria</taxon>
        <taxon>Pseudomonadati</taxon>
        <taxon>Pseudomonadota</taxon>
        <taxon>Betaproteobacteria</taxon>
        <taxon>Nitrosomonadales</taxon>
        <taxon>Nitrosomonadaceae</taxon>
        <taxon>Nitrosospira</taxon>
    </lineage>
</organism>
<sequence>MLNASLKQLSAMLAARKISSVELTSEFLKRSRALNPEYNAFITLDERTSLAQAQAADILIGSGRGQPLTGVPIAQKDIFCTKGWLTTCGSKMLSNFISPYDAHVIGRFNAVGAVNIGKTNMDEFAMGSSNETSFYGPVKNPWDTAAVPGGSSGGSACAVAARMAPAATGTDTGGSIRQPAALCGISGLKPTYGLVSRYGMIAFASSLDQGGPMAKSAEDLGLMLNVMAGFDARDSTSLEREPEDYTRDLEKPLDGLRIGLPKEYFVKEIAEDVARAVEAAIGQYRKLGAETVEVSLPNTKLSVPVYYVLAPAEASSNLSRFDGVRYGYRAPDYLDLNDMYRKTRAQGFGSEVKRRILIGTYVLSHGYYDAYYIQAQKLRRLMAQDFAEAFKECDIIMGPTSPTVAFDLGERSSDPVQMYLSDAYTIAVNLAGLPAMSIPVGFGHKNRPVGLHIIGNYFAEAQMLNVAHQYQLESDWHTRMPKE</sequence>
<keyword id="KW-0067">ATP-binding</keyword>
<keyword id="KW-0436">Ligase</keyword>
<keyword id="KW-0547">Nucleotide-binding</keyword>
<keyword id="KW-0648">Protein biosynthesis</keyword>
<keyword id="KW-1185">Reference proteome</keyword>
<feature type="chain" id="PRO_0000241122" description="Glutamyl-tRNA(Gln) amidotransferase subunit A">
    <location>
        <begin position="1"/>
        <end position="483"/>
    </location>
</feature>
<feature type="active site" description="Charge relay system" evidence="1">
    <location>
        <position position="76"/>
    </location>
</feature>
<feature type="active site" description="Charge relay system" evidence="1">
    <location>
        <position position="151"/>
    </location>
</feature>
<feature type="active site" description="Acyl-ester intermediate" evidence="1">
    <location>
        <position position="175"/>
    </location>
</feature>
<proteinExistence type="inferred from homology"/>